<reference key="1">
    <citation type="submission" date="2006-12" db="EMBL/GenBank/DDBJ databases">
        <title>Complete sequence of Chlorobium phaeobacteroides DSM 266.</title>
        <authorList>
            <consortium name="US DOE Joint Genome Institute"/>
            <person name="Copeland A."/>
            <person name="Lucas S."/>
            <person name="Lapidus A."/>
            <person name="Barry K."/>
            <person name="Detter J.C."/>
            <person name="Glavina del Rio T."/>
            <person name="Hammon N."/>
            <person name="Israni S."/>
            <person name="Pitluck S."/>
            <person name="Goltsman E."/>
            <person name="Schmutz J."/>
            <person name="Larimer F."/>
            <person name="Land M."/>
            <person name="Hauser L."/>
            <person name="Mikhailova N."/>
            <person name="Li T."/>
            <person name="Overmann J."/>
            <person name="Bryant D.A."/>
            <person name="Richardson P."/>
        </authorList>
    </citation>
    <scope>NUCLEOTIDE SEQUENCE [LARGE SCALE GENOMIC DNA]</scope>
    <source>
        <strain>DSM 266 / SMG 266 / 2430</strain>
    </source>
</reference>
<comment type="function">
    <text evidence="1">One of the primary rRNA binding proteins, it binds directly near the 3'-end of the 23S rRNA, where it nucleates assembly of the 50S subunit.</text>
</comment>
<comment type="subunit">
    <text evidence="1">Part of the 50S ribosomal subunit. Forms a cluster with proteins L14 and L19.</text>
</comment>
<comment type="similarity">
    <text evidence="1">Belongs to the universal ribosomal protein uL3 family.</text>
</comment>
<gene>
    <name evidence="1" type="primary">rplC</name>
    <name type="ordered locus">Cpha266_2423</name>
</gene>
<proteinExistence type="inferred from homology"/>
<accession>A1BJ34</accession>
<name>RL3_CHLPD</name>
<keyword id="KW-1185">Reference proteome</keyword>
<keyword id="KW-0687">Ribonucleoprotein</keyword>
<keyword id="KW-0689">Ribosomal protein</keyword>
<keyword id="KW-0694">RNA-binding</keyword>
<keyword id="KW-0699">rRNA-binding</keyword>
<evidence type="ECO:0000255" key="1">
    <source>
        <dbReference type="HAMAP-Rule" id="MF_01325"/>
    </source>
</evidence>
<evidence type="ECO:0000256" key="2">
    <source>
        <dbReference type="SAM" id="MobiDB-lite"/>
    </source>
</evidence>
<evidence type="ECO:0000305" key="3"/>
<organism>
    <name type="scientific">Chlorobium phaeobacteroides (strain DSM 266 / SMG 266 / 2430)</name>
    <dbReference type="NCBI Taxonomy" id="290317"/>
    <lineage>
        <taxon>Bacteria</taxon>
        <taxon>Pseudomonadati</taxon>
        <taxon>Chlorobiota</taxon>
        <taxon>Chlorobiia</taxon>
        <taxon>Chlorobiales</taxon>
        <taxon>Chlorobiaceae</taxon>
        <taxon>Chlorobium/Pelodictyon group</taxon>
        <taxon>Chlorobium</taxon>
    </lineage>
</organism>
<protein>
    <recommendedName>
        <fullName evidence="1">Large ribosomal subunit protein uL3</fullName>
    </recommendedName>
    <alternativeName>
        <fullName evidence="3">50S ribosomal protein L3</fullName>
    </alternativeName>
</protein>
<feature type="chain" id="PRO_1000052029" description="Large ribosomal subunit protein uL3">
    <location>
        <begin position="1"/>
        <end position="209"/>
    </location>
</feature>
<feature type="region of interest" description="Disordered" evidence="2">
    <location>
        <begin position="128"/>
        <end position="163"/>
    </location>
</feature>
<sequence length="209" mass="22479">MGAILGKKIGMTRLYNDKREAISCTIIQAGPCFVTQVKHAEKDGYDAYQIGIGERDEKKVNKPMLGHYKKAGVTPGYKIAEFSKSEINLELEAGAPLDLSVFKEGEKINVLGVSKGKGFAGVVKRHNFGGGSRTHGQSDRLRAPGSVGGSSDPSRTFRGTRMAGRMGGCNITVKNLEIIRIMPESNLLVVKGAIPGPKNSYVKIVSTKK</sequence>
<dbReference type="EMBL" id="CP000492">
    <property type="protein sequence ID" value="ABL66411.1"/>
    <property type="molecule type" value="Genomic_DNA"/>
</dbReference>
<dbReference type="RefSeq" id="WP_011746193.1">
    <property type="nucleotide sequence ID" value="NC_008639.1"/>
</dbReference>
<dbReference type="SMR" id="A1BJ34"/>
<dbReference type="STRING" id="290317.Cpha266_2423"/>
<dbReference type="KEGG" id="cph:Cpha266_2423"/>
<dbReference type="eggNOG" id="COG0087">
    <property type="taxonomic scope" value="Bacteria"/>
</dbReference>
<dbReference type="HOGENOM" id="CLU_044142_4_1_10"/>
<dbReference type="OrthoDB" id="9806135at2"/>
<dbReference type="Proteomes" id="UP000008701">
    <property type="component" value="Chromosome"/>
</dbReference>
<dbReference type="GO" id="GO:0022625">
    <property type="term" value="C:cytosolic large ribosomal subunit"/>
    <property type="evidence" value="ECO:0007669"/>
    <property type="project" value="TreeGrafter"/>
</dbReference>
<dbReference type="GO" id="GO:0019843">
    <property type="term" value="F:rRNA binding"/>
    <property type="evidence" value="ECO:0007669"/>
    <property type="project" value="UniProtKB-UniRule"/>
</dbReference>
<dbReference type="GO" id="GO:0003735">
    <property type="term" value="F:structural constituent of ribosome"/>
    <property type="evidence" value="ECO:0007669"/>
    <property type="project" value="InterPro"/>
</dbReference>
<dbReference type="GO" id="GO:0006412">
    <property type="term" value="P:translation"/>
    <property type="evidence" value="ECO:0007669"/>
    <property type="project" value="UniProtKB-UniRule"/>
</dbReference>
<dbReference type="FunFam" id="2.40.30.10:FF:000004">
    <property type="entry name" value="50S ribosomal protein L3"/>
    <property type="match status" value="1"/>
</dbReference>
<dbReference type="FunFam" id="3.30.160.810:FF:000001">
    <property type="entry name" value="50S ribosomal protein L3"/>
    <property type="match status" value="1"/>
</dbReference>
<dbReference type="Gene3D" id="3.30.160.810">
    <property type="match status" value="1"/>
</dbReference>
<dbReference type="Gene3D" id="2.40.30.10">
    <property type="entry name" value="Translation factors"/>
    <property type="match status" value="1"/>
</dbReference>
<dbReference type="HAMAP" id="MF_01325_B">
    <property type="entry name" value="Ribosomal_uL3_B"/>
    <property type="match status" value="1"/>
</dbReference>
<dbReference type="InterPro" id="IPR000597">
    <property type="entry name" value="Ribosomal_uL3"/>
</dbReference>
<dbReference type="InterPro" id="IPR019927">
    <property type="entry name" value="Ribosomal_uL3_bac/org-type"/>
</dbReference>
<dbReference type="InterPro" id="IPR019926">
    <property type="entry name" value="Ribosomal_uL3_CS"/>
</dbReference>
<dbReference type="InterPro" id="IPR009000">
    <property type="entry name" value="Transl_B-barrel_sf"/>
</dbReference>
<dbReference type="NCBIfam" id="TIGR03625">
    <property type="entry name" value="L3_bact"/>
    <property type="match status" value="1"/>
</dbReference>
<dbReference type="PANTHER" id="PTHR11229">
    <property type="entry name" value="50S RIBOSOMAL PROTEIN L3"/>
    <property type="match status" value="1"/>
</dbReference>
<dbReference type="PANTHER" id="PTHR11229:SF16">
    <property type="entry name" value="LARGE RIBOSOMAL SUBUNIT PROTEIN UL3C"/>
    <property type="match status" value="1"/>
</dbReference>
<dbReference type="Pfam" id="PF00297">
    <property type="entry name" value="Ribosomal_L3"/>
    <property type="match status" value="1"/>
</dbReference>
<dbReference type="SUPFAM" id="SSF50447">
    <property type="entry name" value="Translation proteins"/>
    <property type="match status" value="1"/>
</dbReference>
<dbReference type="PROSITE" id="PS00474">
    <property type="entry name" value="RIBOSOMAL_L3"/>
    <property type="match status" value="1"/>
</dbReference>